<keyword id="KW-0963">Cytoplasm</keyword>
<keyword id="KW-0238">DNA-binding</keyword>
<keyword id="KW-1185">Reference proteome</keyword>
<name>Y7345_BRASB</name>
<proteinExistence type="inferred from homology"/>
<gene>
    <name type="ordered locus">BBta_7345</name>
</gene>
<protein>
    <recommendedName>
        <fullName evidence="1">Nucleoid-associated protein BBta_7345</fullName>
    </recommendedName>
</protein>
<comment type="function">
    <text evidence="1">Binds to DNA and alters its conformation. May be involved in regulation of gene expression, nucleoid organization and DNA protection.</text>
</comment>
<comment type="subunit">
    <text evidence="1">Homodimer.</text>
</comment>
<comment type="subcellular location">
    <subcellularLocation>
        <location evidence="1">Cytoplasm</location>
        <location evidence="1">Nucleoid</location>
    </subcellularLocation>
</comment>
<comment type="similarity">
    <text evidence="1">Belongs to the YbaB/EbfC family.</text>
</comment>
<organism>
    <name type="scientific">Bradyrhizobium sp. (strain BTAi1 / ATCC BAA-1182)</name>
    <dbReference type="NCBI Taxonomy" id="288000"/>
    <lineage>
        <taxon>Bacteria</taxon>
        <taxon>Pseudomonadati</taxon>
        <taxon>Pseudomonadota</taxon>
        <taxon>Alphaproteobacteria</taxon>
        <taxon>Hyphomicrobiales</taxon>
        <taxon>Nitrobacteraceae</taxon>
        <taxon>Bradyrhizobium</taxon>
    </lineage>
</organism>
<reference key="1">
    <citation type="journal article" date="2007" name="Science">
        <title>Legumes symbioses: absence of nod genes in photosynthetic bradyrhizobia.</title>
        <authorList>
            <person name="Giraud E."/>
            <person name="Moulin L."/>
            <person name="Vallenet D."/>
            <person name="Barbe V."/>
            <person name="Cytryn E."/>
            <person name="Avarre J.-C."/>
            <person name="Jaubert M."/>
            <person name="Simon D."/>
            <person name="Cartieaux F."/>
            <person name="Prin Y."/>
            <person name="Bena G."/>
            <person name="Hannibal L."/>
            <person name="Fardoux J."/>
            <person name="Kojadinovic M."/>
            <person name="Vuillet L."/>
            <person name="Lajus A."/>
            <person name="Cruveiller S."/>
            <person name="Rouy Z."/>
            <person name="Mangenot S."/>
            <person name="Segurens B."/>
            <person name="Dossat C."/>
            <person name="Franck W.L."/>
            <person name="Chang W.-S."/>
            <person name="Saunders E."/>
            <person name="Bruce D."/>
            <person name="Richardson P."/>
            <person name="Normand P."/>
            <person name="Dreyfus B."/>
            <person name="Pignol D."/>
            <person name="Stacey G."/>
            <person name="Emerich D."/>
            <person name="Vermeglio A."/>
            <person name="Medigue C."/>
            <person name="Sadowsky M."/>
        </authorList>
    </citation>
    <scope>NUCLEOTIDE SEQUENCE [LARGE SCALE GENOMIC DNA]</scope>
    <source>
        <strain>BTAi1 / ATCC BAA-1182</strain>
    </source>
</reference>
<feature type="chain" id="PRO_1000003693" description="Nucleoid-associated protein BBta_7345">
    <location>
        <begin position="1"/>
        <end position="106"/>
    </location>
</feature>
<sequence length="106" mass="11288">MADFLGMMKQAAQLQSKMQAMQEELGSLEVEGISGGGLVAVRMTAKMEVKGIKIDPSLLKPDEAEILEDLLVTAHGDARRKAEAAMQEKMQAITGKLGLPPGFGFG</sequence>
<evidence type="ECO:0000255" key="1">
    <source>
        <dbReference type="HAMAP-Rule" id="MF_00274"/>
    </source>
</evidence>
<dbReference type="EMBL" id="CP000494">
    <property type="protein sequence ID" value="ABQ39209.1"/>
    <property type="molecule type" value="Genomic_DNA"/>
</dbReference>
<dbReference type="RefSeq" id="WP_012047112.1">
    <property type="nucleotide sequence ID" value="NC_009485.1"/>
</dbReference>
<dbReference type="SMR" id="A5ESR5"/>
<dbReference type="STRING" id="288000.BBta_7345"/>
<dbReference type="KEGG" id="bbt:BBta_7345"/>
<dbReference type="eggNOG" id="COG0718">
    <property type="taxonomic scope" value="Bacteria"/>
</dbReference>
<dbReference type="HOGENOM" id="CLU_140930_0_1_5"/>
<dbReference type="OrthoDB" id="9803080at2"/>
<dbReference type="Proteomes" id="UP000000246">
    <property type="component" value="Chromosome"/>
</dbReference>
<dbReference type="GO" id="GO:0043590">
    <property type="term" value="C:bacterial nucleoid"/>
    <property type="evidence" value="ECO:0007669"/>
    <property type="project" value="UniProtKB-UniRule"/>
</dbReference>
<dbReference type="GO" id="GO:0005829">
    <property type="term" value="C:cytosol"/>
    <property type="evidence" value="ECO:0007669"/>
    <property type="project" value="TreeGrafter"/>
</dbReference>
<dbReference type="GO" id="GO:0003677">
    <property type="term" value="F:DNA binding"/>
    <property type="evidence" value="ECO:0007669"/>
    <property type="project" value="UniProtKB-UniRule"/>
</dbReference>
<dbReference type="Gene3D" id="3.30.1310.10">
    <property type="entry name" value="Nucleoid-associated protein YbaB-like domain"/>
    <property type="match status" value="1"/>
</dbReference>
<dbReference type="HAMAP" id="MF_00274">
    <property type="entry name" value="DNA_YbaB_EbfC"/>
    <property type="match status" value="1"/>
</dbReference>
<dbReference type="InterPro" id="IPR036894">
    <property type="entry name" value="YbaB-like_sf"/>
</dbReference>
<dbReference type="InterPro" id="IPR004401">
    <property type="entry name" value="YbaB/EbfC"/>
</dbReference>
<dbReference type="NCBIfam" id="TIGR00103">
    <property type="entry name" value="DNA_YbaB_EbfC"/>
    <property type="match status" value="1"/>
</dbReference>
<dbReference type="PANTHER" id="PTHR33449">
    <property type="entry name" value="NUCLEOID-ASSOCIATED PROTEIN YBAB"/>
    <property type="match status" value="1"/>
</dbReference>
<dbReference type="PANTHER" id="PTHR33449:SF1">
    <property type="entry name" value="NUCLEOID-ASSOCIATED PROTEIN YBAB"/>
    <property type="match status" value="1"/>
</dbReference>
<dbReference type="Pfam" id="PF02575">
    <property type="entry name" value="YbaB_DNA_bd"/>
    <property type="match status" value="1"/>
</dbReference>
<dbReference type="PIRSF" id="PIRSF004555">
    <property type="entry name" value="UCP004555"/>
    <property type="match status" value="1"/>
</dbReference>
<dbReference type="SUPFAM" id="SSF82607">
    <property type="entry name" value="YbaB-like"/>
    <property type="match status" value="1"/>
</dbReference>
<accession>A5ESR5</accession>